<keyword id="KW-1167">Clathrin- and caveolin-independent endocytosis of virus by host</keyword>
<keyword id="KW-1165">Clathrin-mediated endocytosis of virus by host</keyword>
<keyword id="KW-1015">Disulfide bond</keyword>
<keyword id="KW-1170">Fusion of virus membrane with host endosomal membrane</keyword>
<keyword id="KW-1168">Fusion of virus membrane with host membrane</keyword>
<keyword id="KW-0325">Glycoprotein</keyword>
<keyword id="KW-0348">Hemagglutinin</keyword>
<keyword id="KW-1032">Host cell membrane</keyword>
<keyword id="KW-1043">Host membrane</keyword>
<keyword id="KW-0945">Host-virus interaction</keyword>
<keyword id="KW-0449">Lipoprotein</keyword>
<keyword id="KW-0472">Membrane</keyword>
<keyword id="KW-0564">Palmitate</keyword>
<keyword id="KW-0732">Signal</keyword>
<keyword id="KW-0812">Transmembrane</keyword>
<keyword id="KW-1133">Transmembrane helix</keyword>
<keyword id="KW-1161">Viral attachment to host cell</keyword>
<keyword id="KW-0261">Viral envelope protein</keyword>
<keyword id="KW-1162">Viral penetration into host cytoplasm</keyword>
<keyword id="KW-0946">Virion</keyword>
<keyword id="KW-1164">Virus endocytosis by host</keyword>
<keyword id="KW-1160">Virus entry into host cell</keyword>
<reference key="1">
    <citation type="journal article" date="1992" name="J. Virol.">
        <title>Evolution of the H3 influenza virus hemagglutinin from human and nonhuman hosts.</title>
        <authorList>
            <person name="Bean W.J."/>
            <person name="Schell M."/>
            <person name="Katz J."/>
            <person name="Kawaoka Y."/>
            <person name="Naeve C."/>
            <person name="Gorman O."/>
            <person name="Webster R.G."/>
        </authorList>
    </citation>
    <scope>NUCLEOTIDE SEQUENCE [GENOMIC RNA]</scope>
</reference>
<organism>
    <name type="scientific">Influenza A virus (strain A/Duck/Memphis/928/1974 H3N8)</name>
    <dbReference type="NCBI Taxonomy" id="383553"/>
    <lineage>
        <taxon>Viruses</taxon>
        <taxon>Riboviria</taxon>
        <taxon>Orthornavirae</taxon>
        <taxon>Negarnaviricota</taxon>
        <taxon>Polyploviricotina</taxon>
        <taxon>Insthoviricetes</taxon>
        <taxon>Articulavirales</taxon>
        <taxon>Orthomyxoviridae</taxon>
        <taxon>Alphainfluenzavirus</taxon>
        <taxon>Alphainfluenzavirus influenzae</taxon>
        <taxon>Influenza A virus</taxon>
    </lineage>
</organism>
<protein>
    <recommendedName>
        <fullName evidence="1">Hemagglutinin</fullName>
    </recommendedName>
    <component>
        <recommendedName>
            <fullName evidence="1">Hemagglutinin HA1 chain</fullName>
        </recommendedName>
    </component>
    <component>
        <recommendedName>
            <fullName evidence="1">Hemagglutinin HA2 chain</fullName>
        </recommendedName>
    </component>
</protein>
<feature type="signal peptide" evidence="1">
    <location>
        <begin position="1"/>
        <end position="16"/>
    </location>
</feature>
<feature type="chain" id="PRO_0000440438" description="Hemagglutinin" evidence="1">
    <location>
        <begin position="17"/>
        <end position="566"/>
    </location>
</feature>
<feature type="chain" id="PRO_0000038939" description="Hemagglutinin HA1 chain">
    <location>
        <begin position="17"/>
        <end position="344"/>
    </location>
</feature>
<feature type="chain" id="PRO_0000038940" description="Hemagglutinin HA2 chain" evidence="1">
    <location>
        <begin position="346"/>
        <end position="566"/>
    </location>
</feature>
<feature type="topological domain" description="Extracellular" evidence="1">
    <location>
        <begin position="17"/>
        <end position="530"/>
    </location>
</feature>
<feature type="transmembrane region" description="Helical" evidence="1">
    <location>
        <begin position="531"/>
        <end position="551"/>
    </location>
</feature>
<feature type="topological domain" description="Cytoplasmic" evidence="1">
    <location>
        <begin position="552"/>
        <end position="566"/>
    </location>
</feature>
<feature type="site" description="Cleavage; by host" evidence="1">
    <location>
        <begin position="345"/>
        <end position="346"/>
    </location>
</feature>
<feature type="lipid moiety-binding region" description="S-palmitoyl cysteine; by host" evidence="1">
    <location>
        <position position="555"/>
    </location>
</feature>
<feature type="lipid moiety-binding region" description="S-palmitoyl cysteine; by host" evidence="1">
    <location>
        <position position="562"/>
    </location>
</feature>
<feature type="lipid moiety-binding region" description="S-palmitoyl cysteine; by host" evidence="1">
    <location>
        <position position="565"/>
    </location>
</feature>
<feature type="glycosylation site" description="N-linked (GlcNAc...) asparagine; by host" evidence="1">
    <location>
        <position position="23"/>
    </location>
</feature>
<feature type="glycosylation site" description="N-linked (GlcNAc...) asparagine; by host" evidence="1">
    <location>
        <position position="24"/>
    </location>
</feature>
<feature type="glycosylation site" description="N-linked (GlcNAc...) asparagine; by host" evidence="1">
    <location>
        <position position="38"/>
    </location>
</feature>
<feature type="glycosylation site" description="N-linked (GlcNAc...) asparagine; by host" evidence="1">
    <location>
        <position position="54"/>
    </location>
</feature>
<feature type="glycosylation site" description="N-linked (GlcNAc...) asparagine; by host" evidence="1">
    <location>
        <position position="181"/>
    </location>
</feature>
<feature type="glycosylation site" description="N-linked (GlcNAc...) asparagine; by host" evidence="1">
    <location>
        <position position="301"/>
    </location>
</feature>
<feature type="glycosylation site" description="N-linked (GlcNAc...) asparagine; by host" evidence="1">
    <location>
        <position position="499"/>
    </location>
</feature>
<feature type="disulfide bond" description="Interchain (between HA1 and HA2 chains)" evidence="1">
    <location>
        <begin position="30"/>
        <end position="482"/>
    </location>
</feature>
<feature type="disulfide bond" evidence="1">
    <location>
        <begin position="68"/>
        <end position="293"/>
    </location>
</feature>
<feature type="disulfide bond" evidence="1">
    <location>
        <begin position="80"/>
        <end position="92"/>
    </location>
</feature>
<feature type="disulfide bond" evidence="1">
    <location>
        <begin position="113"/>
        <end position="155"/>
    </location>
</feature>
<feature type="disulfide bond" evidence="1">
    <location>
        <begin position="297"/>
        <end position="321"/>
    </location>
</feature>
<feature type="disulfide bond" evidence="1">
    <location>
        <begin position="489"/>
        <end position="493"/>
    </location>
</feature>
<dbReference type="EMBL" id="M73772">
    <property type="protein sequence ID" value="ABF60577.1"/>
    <property type="molecule type" value="Genomic_RNA"/>
</dbReference>
<dbReference type="SMR" id="P26135"/>
<dbReference type="GlyCosmos" id="P26135">
    <property type="glycosylation" value="7 sites, No reported glycans"/>
</dbReference>
<dbReference type="GO" id="GO:0020002">
    <property type="term" value="C:host cell plasma membrane"/>
    <property type="evidence" value="ECO:0007669"/>
    <property type="project" value="UniProtKB-SubCell"/>
</dbReference>
<dbReference type="GO" id="GO:0016020">
    <property type="term" value="C:membrane"/>
    <property type="evidence" value="ECO:0007669"/>
    <property type="project" value="UniProtKB-UniRule"/>
</dbReference>
<dbReference type="GO" id="GO:0019031">
    <property type="term" value="C:viral envelope"/>
    <property type="evidence" value="ECO:0007669"/>
    <property type="project" value="UniProtKB-UniRule"/>
</dbReference>
<dbReference type="GO" id="GO:0055036">
    <property type="term" value="C:virion membrane"/>
    <property type="evidence" value="ECO:0007669"/>
    <property type="project" value="UniProtKB-SubCell"/>
</dbReference>
<dbReference type="GO" id="GO:0046789">
    <property type="term" value="F:host cell surface receptor binding"/>
    <property type="evidence" value="ECO:0007669"/>
    <property type="project" value="UniProtKB-UniRule"/>
</dbReference>
<dbReference type="GO" id="GO:0075512">
    <property type="term" value="P:clathrin-dependent endocytosis of virus by host cell"/>
    <property type="evidence" value="ECO:0007669"/>
    <property type="project" value="UniProtKB-UniRule"/>
</dbReference>
<dbReference type="GO" id="GO:0039654">
    <property type="term" value="P:fusion of virus membrane with host endosome membrane"/>
    <property type="evidence" value="ECO:0007669"/>
    <property type="project" value="UniProtKB-UniRule"/>
</dbReference>
<dbReference type="GO" id="GO:0019064">
    <property type="term" value="P:fusion of virus membrane with host plasma membrane"/>
    <property type="evidence" value="ECO:0007669"/>
    <property type="project" value="InterPro"/>
</dbReference>
<dbReference type="GO" id="GO:0046761">
    <property type="term" value="P:viral budding from plasma membrane"/>
    <property type="evidence" value="ECO:0007669"/>
    <property type="project" value="UniProtKB-UniRule"/>
</dbReference>
<dbReference type="GO" id="GO:0019062">
    <property type="term" value="P:virion attachment to host cell"/>
    <property type="evidence" value="ECO:0007669"/>
    <property type="project" value="UniProtKB-KW"/>
</dbReference>
<dbReference type="FunFam" id="3.90.20.10:FF:000001">
    <property type="entry name" value="Hemagglutinin"/>
    <property type="match status" value="1"/>
</dbReference>
<dbReference type="FunFam" id="3.90.209.20:FF:000001">
    <property type="entry name" value="Hemagglutinin"/>
    <property type="match status" value="1"/>
</dbReference>
<dbReference type="Gene3D" id="3.90.20.10">
    <property type="match status" value="1"/>
</dbReference>
<dbReference type="Gene3D" id="3.90.209.20">
    <property type="match status" value="1"/>
</dbReference>
<dbReference type="HAMAP" id="MF_04072">
    <property type="entry name" value="INFV_HEMA"/>
    <property type="match status" value="1"/>
</dbReference>
<dbReference type="InterPro" id="IPR008980">
    <property type="entry name" value="Capsid_hemagglutn"/>
</dbReference>
<dbReference type="InterPro" id="IPR013828">
    <property type="entry name" value="Hemagglutn_HA1_a/b_dom_sf"/>
</dbReference>
<dbReference type="InterPro" id="IPR000149">
    <property type="entry name" value="Hemagglutn_influenz_A"/>
</dbReference>
<dbReference type="InterPro" id="IPR001364">
    <property type="entry name" value="Hemagglutn_influenz_A/B"/>
</dbReference>
<dbReference type="Pfam" id="PF00509">
    <property type="entry name" value="Hemagglutinin"/>
    <property type="match status" value="1"/>
</dbReference>
<dbReference type="PRINTS" id="PR00330">
    <property type="entry name" value="HEMAGGLUTN1"/>
</dbReference>
<dbReference type="PRINTS" id="PR00329">
    <property type="entry name" value="HEMAGGLUTN12"/>
</dbReference>
<dbReference type="SUPFAM" id="SSF58064">
    <property type="entry name" value="Influenza hemagglutinin (stalk)"/>
    <property type="match status" value="1"/>
</dbReference>
<dbReference type="SUPFAM" id="SSF49818">
    <property type="entry name" value="Viral protein domain"/>
    <property type="match status" value="1"/>
</dbReference>
<gene>
    <name evidence="1" type="primary">HA</name>
</gene>
<sequence length="566" mass="63573">MKTIIVLSYFFCLALSQDYSESNNSTATLCLGHHAVPNGTIVKTITDDQIEVTNATELVQSSSTGKICNNPHRILDGRDCTLIDALLGDPHCDVFQDETWDLYVERSSAFSNCYPYDVPDYASLRSLVASSGTLEFITEGFTWTGVTQNGGSNACKRGPASGFFSRLNWLTKSGSTYPVLNVTMPNDDNFDKLYVWGVHHPSTNQEQTDLYVQASGRVTVSTRRSQQTIIPNIGSRPWVRGQSGRISIYWTIVKPGDVLVINSNGNLIAPRGYFKIRTGKSSIMRSDAPIDTCISECITPNGSIPNDKPFQNVNKITYGACPKYVKQSTLKLATGMRNVPEKKTRGLFVAIAGFIENGWEGMIDCWYGFRHQNSEGTGQAADLKSTQAAIDQINGKLNRVIEKTNEKFHQIEKEFSEVEGRIQDLENYVEDTKIDLWSYNAELLVALENQHTIDLTDSEMNKLFERTRRQLRENAEDMGSGCFKIYHKCDNACIESIRNGTYDHDIYRDEALNNRFQIKGVELKSGYKDWILWISFATSCFLLCVVLGGFIMWACQRGNIRCNICI</sequence>
<name>HEMA_I74A2</name>
<organismHost>
    <name type="scientific">Aves</name>
    <dbReference type="NCBI Taxonomy" id="8782"/>
</organismHost>
<organismHost>
    <name type="scientific">Equus caballus</name>
    <name type="common">Horse</name>
    <dbReference type="NCBI Taxonomy" id="9796"/>
</organismHost>
<proteinExistence type="inferred from homology"/>
<comment type="function">
    <text>Binds to sialic acid-containing receptors on the cell surface, bringing about the attachment of the virus particle to the cell. This attachment induces virion internalization of about two third of the virus particles through clathrin-dependent endocytosis and about one third through a clathrin- and caveolin-independent pathway. Plays a major role in the determination of host range restriction and virulence. Class I viral fusion protein. Responsible for penetration of the virus into the cell cytoplasm by mediating the fusion of the membrane of the endocytosed virus particle with the endosomal membrane. Low pH in endosomes induces an irreversible conformational change in HA2, releasing the fusion hydrophobic peptide. Several trimers are required to form a competent fusion pore.</text>
</comment>
<comment type="function">
    <text evidence="1">Binds to sialic acid-containing receptors on the cell surface, bringing about the attachment of the virus particle to the cell. This attachment induces virion internalization either through clathrin-dependent endocytosis or through clathrin- and caveolin-independent pathway. Plays a major role in the determination of host range restriction and virulence. Class I viral fusion protein. Responsible for penetration of the virus into the cell cytoplasm by mediating the fusion of the membrane of the endocytosed virus particle with the endosomal membrane. Low pH in endosomes induces an irreversible conformational change in HA2, releasing the fusion hydrophobic peptide. Several trimers are required to form a competent fusion pore.</text>
</comment>
<comment type="subunit">
    <text evidence="1">Homotrimer of disulfide-linked HA1-HA2.</text>
</comment>
<comment type="subcellular location">
    <subcellularLocation>
        <location evidence="1">Virion membrane</location>
        <topology evidence="1">Single-pass type I membrane protein</topology>
    </subcellularLocation>
    <subcellularLocation>
        <location evidence="1">Host apical cell membrane</location>
        <topology evidence="1">Single-pass type I membrane protein</topology>
    </subcellularLocation>
    <text evidence="1">Targeted to the apical plasma membrane in epithelial polarized cells through a signal present in the transmembrane domain. Associated with glycosphingolipid- and cholesterol-enriched detergent-resistant lipid rafts.</text>
</comment>
<comment type="PTM">
    <text evidence="1">Palmitoylated.</text>
</comment>
<comment type="PTM">
    <text evidence="1">In natural infection, inactive HA is matured into HA1 and HA2 outside the cell by one or more trypsin-like, arginine-specific endoprotease secreted by the bronchial epithelial cells. One identified protease that may be involved in this process is secreted in lungs by club cells.</text>
</comment>
<comment type="miscellaneous">
    <text>Major glycoprotein, comprises over 80% of the envelope proteins present in virus particle.</text>
</comment>
<comment type="miscellaneous">
    <text>The extent of infection into host organism is determined by HA. Influenza viruses bud from the apical surface of polarized epithelial cells (e.g. bronchial epithelial cells) into lumen of lungs and are therefore usually pneumotropic. The reason is that HA is cleaved by tryptase clara which is restricted to lungs. However, HAs of H5 and H7 pantropic avian viruses subtypes can be cleaved by furin and subtilisin-type enzymes, allowing the virus to grow in other organs than lungs.</text>
</comment>
<comment type="miscellaneous">
    <text evidence="2">The influenza A genome consist of 8 RNA segments. Genetic variation of hemagglutinin and/or neuraminidase genes results in the emergence of new influenza strains. The mechanism of variation can be the result of point mutations or the result of genetic reassortment between segments of two different strains.</text>
</comment>
<comment type="similarity">
    <text evidence="1">Belongs to the influenza viruses hemagglutinin family.</text>
</comment>
<accession>P26135</accession>
<accession>Q1G0M1</accession>
<evidence type="ECO:0000255" key="1">
    <source>
        <dbReference type="HAMAP-Rule" id="MF_04072"/>
    </source>
</evidence>
<evidence type="ECO:0000305" key="2"/>